<reference key="1">
    <citation type="submission" date="2005-07" db="EMBL/GenBank/DDBJ databases">
        <title>Complete sequence of Synechococcus sp. CC9605.</title>
        <authorList>
            <consortium name="US DOE Joint Genome Institute"/>
            <person name="Copeland A."/>
            <person name="Lucas S."/>
            <person name="Lapidus A."/>
            <person name="Barry K."/>
            <person name="Detter J.C."/>
            <person name="Glavina T."/>
            <person name="Hammon N."/>
            <person name="Israni S."/>
            <person name="Pitluck S."/>
            <person name="Schmutz J."/>
            <person name="Martinez M."/>
            <person name="Larimer F."/>
            <person name="Land M."/>
            <person name="Kyrpides N."/>
            <person name="Ivanova N."/>
            <person name="Richardson P."/>
        </authorList>
    </citation>
    <scope>NUCLEOTIDE SEQUENCE [LARGE SCALE GENOMIC DNA]</scope>
    <source>
        <strain>CC9605</strain>
    </source>
</reference>
<keyword id="KW-0963">Cytoplasm</keyword>
<keyword id="KW-0378">Hydrolase</keyword>
<keyword id="KW-0479">Metal-binding</keyword>
<keyword id="KW-0547">Nucleotide-binding</keyword>
<organism>
    <name type="scientific">Synechococcus sp. (strain CC9605)</name>
    <dbReference type="NCBI Taxonomy" id="110662"/>
    <lineage>
        <taxon>Bacteria</taxon>
        <taxon>Bacillati</taxon>
        <taxon>Cyanobacteriota</taxon>
        <taxon>Cyanophyceae</taxon>
        <taxon>Synechococcales</taxon>
        <taxon>Synechococcaceae</taxon>
        <taxon>Synechococcus</taxon>
    </lineage>
</organism>
<accession>Q3AL65</accession>
<evidence type="ECO:0000255" key="1">
    <source>
        <dbReference type="HAMAP-Rule" id="MF_00060"/>
    </source>
</evidence>
<proteinExistence type="inferred from homology"/>
<dbReference type="EC" id="3.1.3.5" evidence="1"/>
<dbReference type="EMBL" id="CP000110">
    <property type="protein sequence ID" value="ABB34667.1"/>
    <property type="molecule type" value="Genomic_DNA"/>
</dbReference>
<dbReference type="RefSeq" id="WP_011363891.1">
    <property type="nucleotide sequence ID" value="NC_007516.1"/>
</dbReference>
<dbReference type="SMR" id="Q3AL65"/>
<dbReference type="STRING" id="110662.Syncc9605_0899"/>
<dbReference type="KEGG" id="syd:Syncc9605_0899"/>
<dbReference type="eggNOG" id="COG0496">
    <property type="taxonomic scope" value="Bacteria"/>
</dbReference>
<dbReference type="HOGENOM" id="CLU_045192_1_3_3"/>
<dbReference type="OrthoDB" id="9780815at2"/>
<dbReference type="GO" id="GO:0005737">
    <property type="term" value="C:cytoplasm"/>
    <property type="evidence" value="ECO:0007669"/>
    <property type="project" value="UniProtKB-SubCell"/>
</dbReference>
<dbReference type="GO" id="GO:0008254">
    <property type="term" value="F:3'-nucleotidase activity"/>
    <property type="evidence" value="ECO:0007669"/>
    <property type="project" value="TreeGrafter"/>
</dbReference>
<dbReference type="GO" id="GO:0008253">
    <property type="term" value="F:5'-nucleotidase activity"/>
    <property type="evidence" value="ECO:0007669"/>
    <property type="project" value="UniProtKB-UniRule"/>
</dbReference>
<dbReference type="GO" id="GO:0004309">
    <property type="term" value="F:exopolyphosphatase activity"/>
    <property type="evidence" value="ECO:0007669"/>
    <property type="project" value="TreeGrafter"/>
</dbReference>
<dbReference type="GO" id="GO:0046872">
    <property type="term" value="F:metal ion binding"/>
    <property type="evidence" value="ECO:0007669"/>
    <property type="project" value="UniProtKB-UniRule"/>
</dbReference>
<dbReference type="GO" id="GO:0000166">
    <property type="term" value="F:nucleotide binding"/>
    <property type="evidence" value="ECO:0007669"/>
    <property type="project" value="UniProtKB-KW"/>
</dbReference>
<dbReference type="Gene3D" id="3.40.1210.10">
    <property type="entry name" value="Survival protein SurE-like phosphatase/nucleotidase"/>
    <property type="match status" value="1"/>
</dbReference>
<dbReference type="HAMAP" id="MF_00060">
    <property type="entry name" value="SurE"/>
    <property type="match status" value="1"/>
</dbReference>
<dbReference type="InterPro" id="IPR030048">
    <property type="entry name" value="SurE"/>
</dbReference>
<dbReference type="InterPro" id="IPR002828">
    <property type="entry name" value="SurE-like_Pase/nucleotidase"/>
</dbReference>
<dbReference type="InterPro" id="IPR036523">
    <property type="entry name" value="SurE-like_sf"/>
</dbReference>
<dbReference type="NCBIfam" id="NF001490">
    <property type="entry name" value="PRK00346.1-4"/>
    <property type="match status" value="1"/>
</dbReference>
<dbReference type="NCBIfam" id="NF001492">
    <property type="entry name" value="PRK00346.2-2"/>
    <property type="match status" value="1"/>
</dbReference>
<dbReference type="NCBIfam" id="TIGR00087">
    <property type="entry name" value="surE"/>
    <property type="match status" value="1"/>
</dbReference>
<dbReference type="PANTHER" id="PTHR30457">
    <property type="entry name" value="5'-NUCLEOTIDASE SURE"/>
    <property type="match status" value="1"/>
</dbReference>
<dbReference type="PANTHER" id="PTHR30457:SF12">
    <property type="entry name" value="5'_3'-NUCLEOTIDASE SURE"/>
    <property type="match status" value="1"/>
</dbReference>
<dbReference type="Pfam" id="PF01975">
    <property type="entry name" value="SurE"/>
    <property type="match status" value="1"/>
</dbReference>
<dbReference type="SUPFAM" id="SSF64167">
    <property type="entry name" value="SurE-like"/>
    <property type="match status" value="1"/>
</dbReference>
<comment type="function">
    <text evidence="1">Nucleotidase that shows phosphatase activity on nucleoside 5'-monophosphates.</text>
</comment>
<comment type="catalytic activity">
    <reaction evidence="1">
        <text>a ribonucleoside 5'-phosphate + H2O = a ribonucleoside + phosphate</text>
        <dbReference type="Rhea" id="RHEA:12484"/>
        <dbReference type="ChEBI" id="CHEBI:15377"/>
        <dbReference type="ChEBI" id="CHEBI:18254"/>
        <dbReference type="ChEBI" id="CHEBI:43474"/>
        <dbReference type="ChEBI" id="CHEBI:58043"/>
        <dbReference type="EC" id="3.1.3.5"/>
    </reaction>
</comment>
<comment type="cofactor">
    <cofactor evidence="1">
        <name>a divalent metal cation</name>
        <dbReference type="ChEBI" id="CHEBI:60240"/>
    </cofactor>
    <text evidence="1">Binds 1 divalent metal cation per subunit.</text>
</comment>
<comment type="subcellular location">
    <subcellularLocation>
        <location evidence="1">Cytoplasm</location>
    </subcellularLocation>
</comment>
<comment type="similarity">
    <text evidence="1">Belongs to the SurE nucleotidase family.</text>
</comment>
<feature type="chain" id="PRO_0000235655" description="5'-nucleotidase SurE">
    <location>
        <begin position="1"/>
        <end position="269"/>
    </location>
</feature>
<feature type="binding site" evidence="1">
    <location>
        <position position="11"/>
    </location>
    <ligand>
        <name>a divalent metal cation</name>
        <dbReference type="ChEBI" id="CHEBI:60240"/>
    </ligand>
</feature>
<feature type="binding site" evidence="1">
    <location>
        <position position="12"/>
    </location>
    <ligand>
        <name>a divalent metal cation</name>
        <dbReference type="ChEBI" id="CHEBI:60240"/>
    </ligand>
</feature>
<feature type="binding site" evidence="1">
    <location>
        <position position="43"/>
    </location>
    <ligand>
        <name>a divalent metal cation</name>
        <dbReference type="ChEBI" id="CHEBI:60240"/>
    </ligand>
</feature>
<feature type="binding site" evidence="1">
    <location>
        <position position="101"/>
    </location>
    <ligand>
        <name>a divalent metal cation</name>
        <dbReference type="ChEBI" id="CHEBI:60240"/>
    </ligand>
</feature>
<gene>
    <name evidence="1" type="primary">surE</name>
    <name type="ordered locus">Syncc9605_0899</name>
</gene>
<protein>
    <recommendedName>
        <fullName evidence="1">5'-nucleotidase SurE</fullName>
        <ecNumber evidence="1">3.1.3.5</ecNumber>
    </recommendedName>
    <alternativeName>
        <fullName evidence="1">Nucleoside 5'-monophosphate phosphohydrolase</fullName>
    </alternativeName>
</protein>
<sequence>MAPLRILISNDDGVFADGIRTLAAAAAARGHQVTVVCPDQERSATGHGLTLQTPIRAERADELFAPGVTAWACSGTPADCMKLALFELVKEKPNLVLSGINHGPNLGTDVFCSGTVAAAMEGTLEGIRSLAVSSACFQWRQFQAAADLALEVSEQAIADQWPDNLLLNLNIPPCAREEMGALRWTRLSIRRYDEQFSRREDPRGRAYYWLAGEAVQDLESAGEGPRDWPSDVAQIHANSPSLTPIQPDLFWRGPLSGLPQLKLKDQLVR</sequence>
<name>SURE_SYNSC</name>